<feature type="signal peptide" evidence="2">
    <location>
        <begin position="1"/>
        <end position="16"/>
    </location>
</feature>
<feature type="chain" id="PRO_0000411245" description="Probable carboxypeptidase AO090003000058">
    <location>
        <begin position="17"/>
        <end position="430"/>
    </location>
</feature>
<feature type="active site" description="Proton acceptor" evidence="1">
    <location>
        <position position="188"/>
    </location>
</feature>
<feature type="binding site" evidence="1">
    <location>
        <position position="156"/>
    </location>
    <ligand>
        <name>Zn(2+)</name>
        <dbReference type="ChEBI" id="CHEBI:29105"/>
        <label>1</label>
    </ligand>
</feature>
<feature type="binding site" evidence="1">
    <location>
        <position position="156"/>
    </location>
    <ligand>
        <name>Zn(2+)</name>
        <dbReference type="ChEBI" id="CHEBI:29105"/>
        <label>2</label>
    </ligand>
</feature>
<feature type="binding site" evidence="1">
    <location>
        <position position="189"/>
    </location>
    <ligand>
        <name>Zn(2+)</name>
        <dbReference type="ChEBI" id="CHEBI:29105"/>
        <label>1</label>
    </ligand>
</feature>
<feature type="glycosylation site" description="N-linked (GlcNAc...) asparagine" evidence="2">
    <location>
        <position position="84"/>
    </location>
</feature>
<feature type="glycosylation site" description="N-linked (GlcNAc...) asparagine" evidence="2">
    <location>
        <position position="285"/>
    </location>
</feature>
<accession>Q2UMC1</accession>
<organism>
    <name type="scientific">Aspergillus oryzae (strain ATCC 42149 / RIB 40)</name>
    <name type="common">Yellow koji mold</name>
    <dbReference type="NCBI Taxonomy" id="510516"/>
    <lineage>
        <taxon>Eukaryota</taxon>
        <taxon>Fungi</taxon>
        <taxon>Dikarya</taxon>
        <taxon>Ascomycota</taxon>
        <taxon>Pezizomycotina</taxon>
        <taxon>Eurotiomycetes</taxon>
        <taxon>Eurotiomycetidae</taxon>
        <taxon>Eurotiales</taxon>
        <taxon>Aspergillaceae</taxon>
        <taxon>Aspergillus</taxon>
        <taxon>Aspergillus subgen. Circumdati</taxon>
    </lineage>
</organism>
<protein>
    <recommendedName>
        <fullName>Probable carboxypeptidase AO090003000058</fullName>
        <ecNumber>3.4.17.-</ecNumber>
    </recommendedName>
    <alternativeName>
        <fullName>Peptidase M20 domain-containing protein AO090003000058</fullName>
    </alternativeName>
</protein>
<evidence type="ECO:0000250" key="1"/>
<evidence type="ECO:0000255" key="2"/>
<evidence type="ECO:0000305" key="3"/>
<proteinExistence type="inferred from homology"/>
<gene>
    <name type="ORF">AO090003000058</name>
</gene>
<dbReference type="EC" id="3.4.17.-"/>
<dbReference type="EMBL" id="BA000050">
    <property type="protein sequence ID" value="BAE57294.1"/>
    <property type="molecule type" value="Genomic_DNA"/>
</dbReference>
<dbReference type="RefSeq" id="XP_001819296.1">
    <property type="nucleotide sequence ID" value="XM_001819244.3"/>
</dbReference>
<dbReference type="SMR" id="Q2UMC1"/>
<dbReference type="STRING" id="510516.Q2UMC1"/>
<dbReference type="EnsemblFungi" id="BAE57294">
    <property type="protein sequence ID" value="BAE57294"/>
    <property type="gene ID" value="AO090003000058"/>
</dbReference>
<dbReference type="GeneID" id="5991279"/>
<dbReference type="KEGG" id="aor:AO090003000058"/>
<dbReference type="VEuPathDB" id="FungiDB:AO090003000058"/>
<dbReference type="HOGENOM" id="CLU_021802_3_0_1"/>
<dbReference type="OMA" id="RLHKGVM"/>
<dbReference type="OrthoDB" id="96220at5052"/>
<dbReference type="Proteomes" id="UP000006564">
    <property type="component" value="Chromosome 2"/>
</dbReference>
<dbReference type="GO" id="GO:0005576">
    <property type="term" value="C:extracellular region"/>
    <property type="evidence" value="ECO:0007669"/>
    <property type="project" value="UniProtKB-SubCell"/>
</dbReference>
<dbReference type="GO" id="GO:0046872">
    <property type="term" value="F:metal ion binding"/>
    <property type="evidence" value="ECO:0007669"/>
    <property type="project" value="UniProtKB-KW"/>
</dbReference>
<dbReference type="GO" id="GO:0008233">
    <property type="term" value="F:peptidase activity"/>
    <property type="evidence" value="ECO:0007669"/>
    <property type="project" value="UniProtKB-KW"/>
</dbReference>
<dbReference type="GO" id="GO:0006508">
    <property type="term" value="P:proteolysis"/>
    <property type="evidence" value="ECO:0007669"/>
    <property type="project" value="UniProtKB-KW"/>
</dbReference>
<dbReference type="CDD" id="cd05652">
    <property type="entry name" value="M20_ArgE_DapE-like_fungal"/>
    <property type="match status" value="1"/>
</dbReference>
<dbReference type="Gene3D" id="3.30.70.360">
    <property type="match status" value="1"/>
</dbReference>
<dbReference type="Gene3D" id="3.40.630.10">
    <property type="entry name" value="Zn peptidases"/>
    <property type="match status" value="1"/>
</dbReference>
<dbReference type="InterPro" id="IPR001261">
    <property type="entry name" value="ArgE/DapE_CS"/>
</dbReference>
<dbReference type="InterPro" id="IPR036264">
    <property type="entry name" value="Bact_exopeptidase_dim_dom"/>
</dbReference>
<dbReference type="InterPro" id="IPR002933">
    <property type="entry name" value="Peptidase_M20"/>
</dbReference>
<dbReference type="InterPro" id="IPR011650">
    <property type="entry name" value="Peptidase_M20_dimer"/>
</dbReference>
<dbReference type="InterPro" id="IPR050072">
    <property type="entry name" value="Peptidase_M20A"/>
</dbReference>
<dbReference type="PANTHER" id="PTHR43808">
    <property type="entry name" value="ACETYLORNITHINE DEACETYLASE"/>
    <property type="match status" value="1"/>
</dbReference>
<dbReference type="PANTHER" id="PTHR43808:SF8">
    <property type="entry name" value="PEPTIDASE M20 DIMERISATION DOMAIN-CONTAINING PROTEIN"/>
    <property type="match status" value="1"/>
</dbReference>
<dbReference type="Pfam" id="PF07687">
    <property type="entry name" value="M20_dimer"/>
    <property type="match status" value="1"/>
</dbReference>
<dbReference type="Pfam" id="PF01546">
    <property type="entry name" value="Peptidase_M20"/>
    <property type="match status" value="1"/>
</dbReference>
<dbReference type="SUPFAM" id="SSF55031">
    <property type="entry name" value="Bacterial exopeptidase dimerisation domain"/>
    <property type="match status" value="1"/>
</dbReference>
<dbReference type="SUPFAM" id="SSF53187">
    <property type="entry name" value="Zn-dependent exopeptidases"/>
    <property type="match status" value="1"/>
</dbReference>
<dbReference type="PROSITE" id="PS00758">
    <property type="entry name" value="ARGE_DAPE_CPG2_1"/>
    <property type="match status" value="1"/>
</dbReference>
<dbReference type="PROSITE" id="PS00759">
    <property type="entry name" value="ARGE_DAPE_CPG2_2"/>
    <property type="match status" value="1"/>
</dbReference>
<name>P20D2_ASPOR</name>
<reference key="1">
    <citation type="journal article" date="2005" name="Nature">
        <title>Genome sequencing and analysis of Aspergillus oryzae.</title>
        <authorList>
            <person name="Machida M."/>
            <person name="Asai K."/>
            <person name="Sano M."/>
            <person name="Tanaka T."/>
            <person name="Kumagai T."/>
            <person name="Terai G."/>
            <person name="Kusumoto K."/>
            <person name="Arima T."/>
            <person name="Akita O."/>
            <person name="Kashiwagi Y."/>
            <person name="Abe K."/>
            <person name="Gomi K."/>
            <person name="Horiuchi H."/>
            <person name="Kitamoto K."/>
            <person name="Kobayashi T."/>
            <person name="Takeuchi M."/>
            <person name="Denning D.W."/>
            <person name="Galagan J.E."/>
            <person name="Nierman W.C."/>
            <person name="Yu J."/>
            <person name="Archer D.B."/>
            <person name="Bennett J.W."/>
            <person name="Bhatnagar D."/>
            <person name="Cleveland T.E."/>
            <person name="Fedorova N.D."/>
            <person name="Gotoh O."/>
            <person name="Horikawa H."/>
            <person name="Hosoyama A."/>
            <person name="Ichinomiya M."/>
            <person name="Igarashi R."/>
            <person name="Iwashita K."/>
            <person name="Juvvadi P.R."/>
            <person name="Kato M."/>
            <person name="Kato Y."/>
            <person name="Kin T."/>
            <person name="Kokubun A."/>
            <person name="Maeda H."/>
            <person name="Maeyama N."/>
            <person name="Maruyama J."/>
            <person name="Nagasaki H."/>
            <person name="Nakajima T."/>
            <person name="Oda K."/>
            <person name="Okada K."/>
            <person name="Paulsen I."/>
            <person name="Sakamoto K."/>
            <person name="Sawano T."/>
            <person name="Takahashi M."/>
            <person name="Takase K."/>
            <person name="Terabayashi Y."/>
            <person name="Wortman J.R."/>
            <person name="Yamada O."/>
            <person name="Yamagata Y."/>
            <person name="Anazawa H."/>
            <person name="Hata Y."/>
            <person name="Koide Y."/>
            <person name="Komori T."/>
            <person name="Koyama Y."/>
            <person name="Minetoki T."/>
            <person name="Suharnan S."/>
            <person name="Tanaka A."/>
            <person name="Isono K."/>
            <person name="Kuhara S."/>
            <person name="Ogasawara N."/>
            <person name="Kikuchi H."/>
        </authorList>
    </citation>
    <scope>NUCLEOTIDE SEQUENCE [LARGE SCALE GENOMIC DNA]</scope>
    <source>
        <strain>ATCC 42149 / RIB 40</strain>
    </source>
</reference>
<comment type="cofactor">
    <cofactor evidence="1">
        <name>Zn(2+)</name>
        <dbReference type="ChEBI" id="CHEBI:29105"/>
    </cofactor>
    <text evidence="1">Binds 2 Zn(2+) ions per subunit.</text>
</comment>
<comment type="subcellular location">
    <subcellularLocation>
        <location evidence="3">Secreted</location>
    </subcellularLocation>
</comment>
<comment type="similarity">
    <text evidence="3">Belongs to the peptidase M20A family.</text>
</comment>
<sequence>MKSIYSLVLCTALTAASPHPAFPQSPLGVPTTSSPSTGTFNSAEEVINASPFLSFHRDIVQIESISSNEHNVGEFIADFLRARNFTVIEQAVTSSSQTENQERFNVFAYPSSNTPEILITSHIDTVPPFIPYSLDTDSTTDNDPSTIRISGRGSVDAKGSVAAQIFAALDVLEQNPSAPLGLLFVVGEETGGDGMRAFSESSLNPAPSAFHTVIFGEPTELALVSGHKGMLGFEIVAKGHAAHSGYPWLGRSAISAVLPALSRVDQLGNIPADKGGLPSSPKYGNTTVNIGRVDAGVAANVVPATARADVAVRLAAGTPDEARDIVRRAVRDATDGNPDVYAEFNTRSEGYPPQDLDTDVDGFDITTVNYGTDVPNLQIHEREDGPVRRYLYGPGSIHVAHGDNEAITVGDLQEAVRGYRKLIEAALQRR</sequence>
<keyword id="KW-0325">Glycoprotein</keyword>
<keyword id="KW-0378">Hydrolase</keyword>
<keyword id="KW-0479">Metal-binding</keyword>
<keyword id="KW-0645">Protease</keyword>
<keyword id="KW-1185">Reference proteome</keyword>
<keyword id="KW-0964">Secreted</keyword>
<keyword id="KW-0732">Signal</keyword>
<keyword id="KW-0862">Zinc</keyword>